<sequence>MRLHGAIVLLAALLALVTAQQRGGGRSRGGVKGSAWGGRPAPFRSWDTARYRPWQEGTARQNDCWRGGDVTFDISNDAPTLVGARATFSIALRFPGTQTVLPDGRVVWSQNCTVNGTRMLQGDPVYPEQLAEGSDGVFPDGQPFPRSAWGKRGRFVYVWWTWGRYWQVVDGATSQLTVGTDGVALGSYTMEVVVYHYRGRQRFIPIGHASTQFSITDQVPIAVDVTQLEVAAGDGGSFVRNRPVAFNVRLHDPSHYLRDADISYSWDFGDQSGTLISRSPTVTHTYLQAGSFAARLVLQAAIPLSSCGTSAPPVVDPTTGPVPSLGPTATQPVGPTGSGTATAPSNLTGSGTAAAPGTTAAPRASGAPAEPTGVSVAVLSDSAATEPLPDPVLSTAVADAAAGTDPTADPLPPTSVSSGGDAPGTVAPTAVEGSVAAGVGTAEDVAAATPGATAADVAVDTAGATDGDAVGPTAAATAESIADPTAGATDGDAVGATAESIADPTAGATDGDAVGPTAAATAESIADPTAGATAVSSGSATAGATAEPLLLVKRQAPEAEPTGCVLYRYGTFSTELNIVQGIESVAIVQVVPAAPEGSGNSVELTVTCEGSLPEEVCTVVADAECRTAQMQTCSAVAPAPGCQLVLRQDFNQSGLYCLNVSLANGNGLAVASTHVAVGGASPAASGTTLTVGLLWAPLIAAALGTAAYTYRRVKYSPLLPTAPTAPRPHSWLPPGATLRLLLRQAFGGAPSGESSPLLRANAV</sequence>
<name>PMEL_CHICK</name>
<dbReference type="EMBL" id="D88348">
    <property type="protein sequence ID" value="BAA13589.2"/>
    <property type="molecule type" value="mRNA"/>
</dbReference>
<dbReference type="EMBL" id="AY636124">
    <property type="protein sequence ID" value="AAT58245.1"/>
    <property type="molecule type" value="Genomic_DNA"/>
</dbReference>
<dbReference type="EMBL" id="AY636125">
    <property type="protein sequence ID" value="AAT58246.1"/>
    <property type="molecule type" value="Genomic_DNA"/>
</dbReference>
<dbReference type="EMBL" id="AY636126">
    <property type="protein sequence ID" value="AAT58247.1"/>
    <property type="molecule type" value="Genomic_DNA"/>
</dbReference>
<dbReference type="EMBL" id="AY636127">
    <property type="protein sequence ID" value="AAT58248.1"/>
    <property type="molecule type" value="Genomic_DNA"/>
</dbReference>
<dbReference type="EMBL" id="AY636128">
    <property type="protein sequence ID" value="AAT58249.1"/>
    <property type="molecule type" value="Genomic_DNA"/>
</dbReference>
<dbReference type="EMBL" id="AY636129">
    <property type="protein sequence ID" value="AAT58250.1"/>
    <property type="molecule type" value="Genomic_DNA"/>
</dbReference>
<dbReference type="RefSeq" id="NP_990443.3">
    <property type="nucleotide sequence ID" value="NM_205112.3"/>
</dbReference>
<dbReference type="FunCoup" id="Q98917">
    <property type="interactions" value="601"/>
</dbReference>
<dbReference type="STRING" id="9031.ENSGALP00000051268"/>
<dbReference type="GlyCosmos" id="Q98917">
    <property type="glycosylation" value="5 sites, No reported glycans"/>
</dbReference>
<dbReference type="GlyGen" id="Q98917">
    <property type="glycosylation" value="10 sites"/>
</dbReference>
<dbReference type="PaxDb" id="9031-ENSGALP00000023540"/>
<dbReference type="GeneID" id="396007"/>
<dbReference type="KEGG" id="gga:396007"/>
<dbReference type="CTD" id="6490"/>
<dbReference type="VEuPathDB" id="HostDB:geneid_396007"/>
<dbReference type="eggNOG" id="ENOG502QV5K">
    <property type="taxonomic scope" value="Eukaryota"/>
</dbReference>
<dbReference type="InParanoid" id="Q98917"/>
<dbReference type="OMA" id="ASPRNWF"/>
<dbReference type="OrthoDB" id="9939762at2759"/>
<dbReference type="PhylomeDB" id="Q98917"/>
<dbReference type="PRO" id="PR:Q98917"/>
<dbReference type="Proteomes" id="UP000000539">
    <property type="component" value="Unassembled WGS sequence"/>
</dbReference>
<dbReference type="GO" id="GO:0042470">
    <property type="term" value="C:melanosome"/>
    <property type="evidence" value="ECO:0000315"/>
    <property type="project" value="AgBase"/>
</dbReference>
<dbReference type="GO" id="GO:0034493">
    <property type="term" value="C:melanosome lumen"/>
    <property type="evidence" value="ECO:0007669"/>
    <property type="project" value="UniProtKB-SubCell"/>
</dbReference>
<dbReference type="GO" id="GO:0005886">
    <property type="term" value="C:plasma membrane"/>
    <property type="evidence" value="ECO:0000318"/>
    <property type="project" value="GO_Central"/>
</dbReference>
<dbReference type="GO" id="GO:0032438">
    <property type="term" value="P:melanosome organization"/>
    <property type="evidence" value="ECO:0000318"/>
    <property type="project" value="GO_Central"/>
</dbReference>
<dbReference type="CDD" id="cd00146">
    <property type="entry name" value="PKD"/>
    <property type="match status" value="1"/>
</dbReference>
<dbReference type="FunFam" id="2.60.40.10:FF:001512">
    <property type="entry name" value="Premelanosome protein a"/>
    <property type="match status" value="1"/>
</dbReference>
<dbReference type="Gene3D" id="2.60.40.10">
    <property type="entry name" value="Immunoglobulins"/>
    <property type="match status" value="1"/>
</dbReference>
<dbReference type="InterPro" id="IPR013783">
    <property type="entry name" value="Ig-like_fold"/>
</dbReference>
<dbReference type="InterPro" id="IPR045219">
    <property type="entry name" value="PKAT"/>
</dbReference>
<dbReference type="InterPro" id="IPR046846">
    <property type="entry name" value="PKAT_KLD"/>
</dbReference>
<dbReference type="InterPro" id="IPR022409">
    <property type="entry name" value="PKD/Chitinase_dom"/>
</dbReference>
<dbReference type="InterPro" id="IPR000601">
    <property type="entry name" value="PKD_dom"/>
</dbReference>
<dbReference type="InterPro" id="IPR035986">
    <property type="entry name" value="PKD_dom_sf"/>
</dbReference>
<dbReference type="PANTHER" id="PTHR11861:SF1">
    <property type="entry name" value="MELANOCYTE PROTEIN PMEL"/>
    <property type="match status" value="1"/>
</dbReference>
<dbReference type="PANTHER" id="PTHR11861">
    <property type="entry name" value="MELANOCYTE PROTEIN PMEL 17-RELATED"/>
    <property type="match status" value="1"/>
</dbReference>
<dbReference type="Pfam" id="PF20433">
    <property type="entry name" value="PKAT_KLD"/>
    <property type="match status" value="1"/>
</dbReference>
<dbReference type="Pfam" id="PF00801">
    <property type="entry name" value="PKD"/>
    <property type="match status" value="1"/>
</dbReference>
<dbReference type="SMART" id="SM00089">
    <property type="entry name" value="PKD"/>
    <property type="match status" value="1"/>
</dbReference>
<dbReference type="SUPFAM" id="SSF49299">
    <property type="entry name" value="PKD domain"/>
    <property type="match status" value="1"/>
</dbReference>
<dbReference type="PROSITE" id="PS50093">
    <property type="entry name" value="PKD"/>
    <property type="match status" value="1"/>
</dbReference>
<feature type="signal peptide" evidence="1">
    <location>
        <begin position="1"/>
        <end position="19"/>
    </location>
</feature>
<feature type="chain" id="PRO_0000024714" description="Melanocyte protein PMEL">
    <location>
        <begin position="20"/>
        <end position="763"/>
    </location>
</feature>
<feature type="domain" description="PKD" evidence="2">
    <location>
        <begin position="223"/>
        <end position="323"/>
    </location>
</feature>
<feature type="repeat" description="1">
    <location>
        <begin position="441"/>
        <end position="464"/>
    </location>
</feature>
<feature type="repeat" description="2">
    <location>
        <begin position="465"/>
        <end position="488"/>
    </location>
</feature>
<feature type="repeat" description="3; approximate">
    <location>
        <begin position="489"/>
        <end position="508"/>
    </location>
</feature>
<feature type="repeat" description="4">
    <location>
        <begin position="509"/>
        <end position="532"/>
    </location>
</feature>
<feature type="region of interest" description="Disordered" evidence="3">
    <location>
        <begin position="313"/>
        <end position="372"/>
    </location>
</feature>
<feature type="region of interest" description="Disordered" evidence="3">
    <location>
        <begin position="402"/>
        <end position="428"/>
    </location>
</feature>
<feature type="region of interest" description="4 X 24 AA approximate tandem repeats of T-[AD]-[EG]-D-[AV]-[AV]-[AG]-[AP]-T-[AP]-[AG]-A-T-A-[AE]-[DS]-[IV]-A-[DV]-[DP]-T-A-G-A">
    <location>
        <begin position="441"/>
        <end position="532"/>
    </location>
</feature>
<feature type="compositionally biased region" description="Low complexity" evidence="3">
    <location>
        <begin position="313"/>
        <end position="323"/>
    </location>
</feature>
<feature type="compositionally biased region" description="Polar residues" evidence="3">
    <location>
        <begin position="327"/>
        <end position="347"/>
    </location>
</feature>
<feature type="compositionally biased region" description="Low complexity" evidence="3">
    <location>
        <begin position="348"/>
        <end position="371"/>
    </location>
</feature>
<feature type="glycosylation site" description="N-linked (GlcNAc...) asparagine" evidence="1">
    <location>
        <position position="111"/>
    </location>
</feature>
<feature type="glycosylation site" description="N-linked (GlcNAc...) asparagine" evidence="1">
    <location>
        <position position="115"/>
    </location>
</feature>
<feature type="glycosylation site" description="N-linked (GlcNAc...) asparagine" evidence="1">
    <location>
        <position position="346"/>
    </location>
</feature>
<feature type="glycosylation site" description="N-linked (GlcNAc...) asparagine" evidence="1">
    <location>
        <position position="651"/>
    </location>
</feature>
<feature type="glycosylation site" description="N-linked (GlcNAc...) asparagine" evidence="1">
    <location>
        <position position="659"/>
    </location>
</feature>
<feature type="sequence variant" description="In strain: Black Langshan.">
    <original>S</original>
    <variation>P</variation>
    <location>
        <position position="34"/>
    </location>
</feature>
<feature type="sequence variant" description="In strain: Dun.">
    <original>A</original>
    <variation>V</variation>
    <location>
        <position position="35"/>
    </location>
</feature>
<feature type="sequence variant" description="In strain: Dun.">
    <original>G</original>
    <variation>S</variation>
    <location>
        <position position="96"/>
    </location>
</feature>
<feature type="sequence variant" description="In strain: Broiler.">
    <original>A</original>
    <variation>V</variation>
    <location>
        <position position="232"/>
    </location>
</feature>
<feature type="sequence variant" description="In strain: Smoky.">
    <location>
        <begin position="280"/>
        <end position="283"/>
    </location>
</feature>
<feature type="sequence variant" description="In strain: Dun and Red jungle fowl.">
    <original>D</original>
    <variation>N</variation>
    <location>
        <position position="399"/>
    </location>
</feature>
<feature type="sequence variant" description="In strain: Broiler.">
    <original>G</original>
    <variation>GPTAA</variation>
    <location>
        <position position="495"/>
    </location>
</feature>
<feature type="sequence variant" description="In strain: Dun and Red jungle fowl.">
    <original>G</original>
    <variation>GPTAAATAESIADPTAGATDGDAVGPTAA</variation>
    <location>
        <position position="495"/>
    </location>
</feature>
<feature type="sequence variant" description="In strain: Broiler, Dun and Red jungle fowl.">
    <original>TA</original>
    <variation>IV</variation>
    <location>
        <begin position="505"/>
        <end position="506"/>
    </location>
</feature>
<feature type="sequence variant" description="In strain: Broiler.">
    <original>E</original>
    <variation>K</variation>
    <location>
        <position position="558"/>
    </location>
</feature>
<feature type="sequence variant" description="In strain: Black Langshan, Broiler, Dun and Red jungle fowl.">
    <location>
        <begin position="695"/>
        <end position="697"/>
    </location>
</feature>
<feature type="sequence variant" description="In strain: Dun.">
    <location>
        <begin position="701"/>
        <end position="705"/>
    </location>
</feature>
<feature type="sequence variant" description="In strain: Dun.">
    <original>R</original>
    <variation>C</variation>
    <location>
        <position position="712"/>
    </location>
</feature>
<feature type="sequence conflict" description="In Ref. 2; BAA13589." evidence="4" ref="2">
    <original>I</original>
    <variation>M</variation>
    <location>
        <position position="699"/>
    </location>
</feature>
<protein>
    <recommendedName>
        <fullName>Melanocyte protein PMEL</fullName>
    </recommendedName>
    <alternativeName>
        <fullName>115 kDa melanosomal matrix protein</fullName>
    </alternativeName>
    <alternativeName>
        <fullName>Melanocyte protein Pmel 17</fullName>
    </alternativeName>
    <alternativeName>
        <fullName>Premelanosome protein</fullName>
    </alternativeName>
    <alternativeName>
        <fullName>Silver locus protein homolog</fullName>
    </alternativeName>
</protein>
<evidence type="ECO:0000255" key="1"/>
<evidence type="ECO:0000255" key="2">
    <source>
        <dbReference type="PROSITE-ProRule" id="PRU00151"/>
    </source>
</evidence>
<evidence type="ECO:0000256" key="3">
    <source>
        <dbReference type="SAM" id="MobiDB-lite"/>
    </source>
</evidence>
<evidence type="ECO:0000305" key="4"/>
<accession>Q98917</accession>
<accession>Q6DW60</accession>
<accession>Q6DW61</accession>
<accession>Q6DW62</accession>
<accession>Q6DW63</accession>
<accession>Q6DW64</accession>
<accession>Q6DW65</accession>
<comment type="function">
    <text>Might be required for polymerization of melanin onto the core structure of melanosomes with enzymatic function of tyrosinase.</text>
</comment>
<comment type="subcellular location">
    <subcellularLocation>
        <location>Melanosome lumen</location>
    </subcellularLocation>
    <text>On the fibrous matrix structure of the premelanosome.</text>
</comment>
<comment type="tissue specificity">
    <text>Specific to pigmented epithelial cells and melanocytes. Not expressed in lens, neural retina, brain, heart, gizzard or liver.</text>
</comment>
<comment type="developmental stage">
    <text>Expressed during the redifferentiation of pigmented epithelial cells (PEC).</text>
</comment>
<comment type="PTM">
    <text>Glycosylated.</text>
</comment>
<comment type="polymorphism">
    <text>Mutations in PMEL cause the Dominant white, Dun and Smoky plumage phenotypes in chicken. Both Dominant white and Dun inhibit the expression of black eumelanin giving rise to white plumage while Smoky gives a gray phenotype. The Dominant white phenotype is a breed characteristic of the White leghorn strain.</text>
</comment>
<comment type="similarity">
    <text evidence="4">Belongs to the PMEL/NMB family.</text>
</comment>
<gene>
    <name type="primary">PMEL</name>
    <name type="synonym">MMP115</name>
    <name type="synonym">PMEL17</name>
    <name type="synonym">SILV</name>
</gene>
<reference key="1">
    <citation type="journal article" date="1991" name="Pigment Cell Res.">
        <title>Complete sequence and expression of a cDNA encoding a chicken 115-kDa melanosomal matrix protein.</title>
        <authorList>
            <person name="Mochii M."/>
            <person name="Agata K."/>
            <person name="Eguchi G."/>
        </authorList>
    </citation>
    <scope>NUCLEOTIDE SEQUENCE [MRNA]</scope>
    <source>
        <strain>White leghorn</strain>
        <tissue>Retinal pigment epithelium</tissue>
    </source>
</reference>
<reference key="2">
    <citation type="submission" date="2004-11" db="EMBL/GenBank/DDBJ databases">
        <authorList>
            <person name="Mochii M."/>
            <person name="Agata K."/>
            <person name="Eguchi G."/>
            <person name="Zhong J."/>
            <person name="Kuliawat R."/>
        </authorList>
    </citation>
    <scope>SEQUENCE REVISION TO 383-384 AND 679-758</scope>
</reference>
<reference key="3">
    <citation type="journal article" date="2004" name="Genetics">
        <title>The Dominant white, Dun and Smoky color variants in chicken are associated with insertion/deletion polymorphisms in the PMEL17 gene.</title>
        <authorList>
            <person name="Kerje S."/>
            <person name="Sharma P."/>
            <person name="Gunnarsson U."/>
            <person name="Kim H."/>
            <person name="Bagchi S."/>
            <person name="Fredriksson R."/>
            <person name="Schuetz K."/>
            <person name="Jensen P."/>
            <person name="von Heijne G."/>
            <person name="Okimoto R."/>
            <person name="Andersson L."/>
        </authorList>
    </citation>
    <scope>NUCLEOTIDE SEQUENCE [GENOMIC DNA]</scope>
    <source>
        <strain>Black Langshan</strain>
        <strain>Broiler</strain>
        <strain>Dun</strain>
        <strain>Red jungle fowl</strain>
        <strain>Smoky</strain>
        <strain>White leghorn</strain>
    </source>
</reference>
<reference key="4">
    <citation type="journal article" date="1988" name="Cell Differ.">
        <title>Expression of gene coding for a melanosomal matrix protein transcriptionally regulated in the transdifferentiation of chick embryo pigmented epithelial cells.</title>
        <authorList>
            <person name="Mochii M."/>
            <person name="Agata K."/>
            <person name="Kobayashi H."/>
            <person name="Yamamoto T.S."/>
            <person name="Eguchi G."/>
        </authorList>
    </citation>
    <scope>CHARACTERIZATION</scope>
    <source>
        <strain>White leghorn</strain>
        <tissue>Retinal pigment epithelium</tissue>
    </source>
</reference>
<organism>
    <name type="scientific">Gallus gallus</name>
    <name type="common">Chicken</name>
    <dbReference type="NCBI Taxonomy" id="9031"/>
    <lineage>
        <taxon>Eukaryota</taxon>
        <taxon>Metazoa</taxon>
        <taxon>Chordata</taxon>
        <taxon>Craniata</taxon>
        <taxon>Vertebrata</taxon>
        <taxon>Euteleostomi</taxon>
        <taxon>Archelosauria</taxon>
        <taxon>Archosauria</taxon>
        <taxon>Dinosauria</taxon>
        <taxon>Saurischia</taxon>
        <taxon>Theropoda</taxon>
        <taxon>Coelurosauria</taxon>
        <taxon>Aves</taxon>
        <taxon>Neognathae</taxon>
        <taxon>Galloanserae</taxon>
        <taxon>Galliformes</taxon>
        <taxon>Phasianidae</taxon>
        <taxon>Phasianinae</taxon>
        <taxon>Gallus</taxon>
    </lineage>
</organism>
<keyword id="KW-0325">Glycoprotein</keyword>
<keyword id="KW-1185">Reference proteome</keyword>
<keyword id="KW-0677">Repeat</keyword>
<keyword id="KW-0732">Signal</keyword>
<proteinExistence type="evidence at protein level"/>